<protein>
    <recommendedName>
        <fullName>Inactive delta-guaiene synthase</fullName>
    </recommendedName>
</protein>
<gene>
    <name type="primary">C1</name>
</gene>
<name>DGUSI_AQUCR</name>
<feature type="chain" id="PRO_0000419794" description="Inactive delta-guaiene synthase">
    <location>
        <begin position="1"/>
        <end position="547"/>
    </location>
</feature>
<feature type="short sequence motif" description="DDXXD motif">
    <location>
        <begin position="299"/>
        <end position="303"/>
    </location>
</feature>
<feature type="binding site" evidence="1">
    <location>
        <position position="299"/>
    </location>
    <ligand>
        <name>Mg(2+)</name>
        <dbReference type="ChEBI" id="CHEBI:18420"/>
        <label>1</label>
    </ligand>
</feature>
<feature type="binding site" evidence="1">
    <location>
        <position position="299"/>
    </location>
    <ligand>
        <name>Mg(2+)</name>
        <dbReference type="ChEBI" id="CHEBI:18420"/>
        <label>2</label>
    </ligand>
</feature>
<feature type="binding site" evidence="1">
    <location>
        <position position="303"/>
    </location>
    <ligand>
        <name>Mg(2+)</name>
        <dbReference type="ChEBI" id="CHEBI:18420"/>
        <label>1</label>
    </ligand>
</feature>
<feature type="binding site" evidence="1">
    <location>
        <position position="303"/>
    </location>
    <ligand>
        <name>Mg(2+)</name>
        <dbReference type="ChEBI" id="CHEBI:18420"/>
        <label>2</label>
    </ligand>
</feature>
<feature type="binding site" evidence="1">
    <location>
        <position position="444"/>
    </location>
    <ligand>
        <name>Mg(2+)</name>
        <dbReference type="ChEBI" id="CHEBI:18420"/>
        <label>3</label>
    </ligand>
</feature>
<feature type="mutagenesis site" description="Restore guaiene synthase activity; when associated with E-241; S-296 and Y-337. Restore guaiene synthase activity; when associated with R-144; E-241; S-296 and Y-337. No effect; when associated with R-144; S-296 and Y-337. No effect; when associated with R-144; E-241 and Y-337. No effect; when associated with R-144; E-241 and S-296." evidence="2">
    <original>Y</original>
    <variation>S</variation>
    <location>
        <position position="110"/>
    </location>
</feature>
<feature type="mutagenesis site" description="Restore guaiene synthase activity; when associated with Y-110; E-241; S-296 and Y-337. No effect; when associated with E-241; S-296 and Y-337. No effect; when associated with Y-110; S-296 and Y-337. No effect; when associated with Y-110; E-241 and Y-337. No effect; when associated with Y-110; E-241 and S-296." evidence="2">
    <original>W</original>
    <variation>R</variation>
    <location>
        <position position="144"/>
    </location>
</feature>
<feature type="mutagenesis site" description="Restore guaiene synthase activity; when associated with Y-110; S-296 and Y-337. Restore guaiene synthase activity; when associated with Y-110; R-144; S-296 and Y-337. No effect; when associated with R-144; S-296 and Y-337. No effect; when associated with Y-110; R-144 and Y-337. No effect; when associated with Y-110; R-144 and S-296." evidence="2">
    <original>V</original>
    <variation>E</variation>
    <location>
        <position position="241"/>
    </location>
</feature>
<feature type="mutagenesis site" description="Restore guaiene synthase activity; when associated with Y-110; E-241 and Y-337. Restore guaiene synthase activity; when associated with Y-110; R-144; E-241 and Y-337. No effect; when associated with R-144; E-241 and Y-337. No effect; when associated with Y-110; R-144 and Y-337. No effect; when associated with Y-110; R-144 and E-241." evidence="2">
    <original>P</original>
    <variation>S</variation>
    <location>
        <position position="296"/>
    </location>
</feature>
<feature type="mutagenesis site" description="Restore guaiene synthase activity; when associated with Y-110; E-241 and S-296. Restore guaiene synthase activity; when associated with Y-110; R-144; E-241 and S-296. No effect; when associated with R-144; E-241 and S-296. No effect; when associated with Y-110; R-144 and S-296. No effect; when associated with Y-110; R-144 and E-241." evidence="2">
    <original>H</original>
    <variation>Y</variation>
    <location>
        <position position="337"/>
    </location>
</feature>
<proteinExistence type="evidence at protein level"/>
<sequence length="547" mass="63874">MSSAKLGSASEDVSRRDANYHPTVWGDFFLTHSSNFLENNDSILEKHEELKQEVRNLLVVETSDLPSKIQLTDEIIRLGVGYHFETEIKAQLEKLHDHQLHLNFDLLTTYVWFRLLRGHGFSISSDVFKRFKNTKGEFETEDAWTLWCLYEATHLRVDGEDILEEAIQFSRKKLEALLPELSFPLNECVRDALHIPYHRNVQRLAARQYIPQYDAEPTKIESLSLFAKIDFNMLQALHQSVLREASRWWKEFDFPSKLPYARDRIAEGYYWMMGAHFEPKFSLSRKFLNRIIGITPLIDDTYDVYGTLEEVTLFTEAVERWDIEAVKDIPKYMQVIHTGMLGIFEDFKDNLINARGKDYCIDYAIEVFKEIVRSYQREAEYFHTGYVPSYDEYMENSIISGGYKMFIILMLIGRGEFELKETLDWASTIPEMVKASSLIARYIDDLQTYKAEEERGETVSAVRCYMREFGVSEEQACKKMREMIEIEWKRLNKTTLEADEISSSVVIPSLNFTRVLEVMYDKGDGYSDSQGVTKDRIAALLRHAIEI</sequence>
<keyword id="KW-0460">Magnesium</keyword>
<keyword id="KW-0479">Metal-binding</keyword>
<dbReference type="EMBL" id="GU083696">
    <property type="protein sequence ID" value="ACY38194.1"/>
    <property type="molecule type" value="mRNA"/>
</dbReference>
<dbReference type="SMR" id="D0VMR5"/>
<dbReference type="GO" id="GO:0000287">
    <property type="term" value="F:magnesium ion binding"/>
    <property type="evidence" value="ECO:0007669"/>
    <property type="project" value="InterPro"/>
</dbReference>
<dbReference type="GO" id="GO:0010333">
    <property type="term" value="F:terpene synthase activity"/>
    <property type="evidence" value="ECO:0007669"/>
    <property type="project" value="InterPro"/>
</dbReference>
<dbReference type="GO" id="GO:0016102">
    <property type="term" value="P:diterpenoid biosynthetic process"/>
    <property type="evidence" value="ECO:0007669"/>
    <property type="project" value="InterPro"/>
</dbReference>
<dbReference type="CDD" id="cd00684">
    <property type="entry name" value="Terpene_cyclase_plant_C1"/>
    <property type="match status" value="1"/>
</dbReference>
<dbReference type="FunFam" id="1.10.600.10:FF:000007">
    <property type="entry name" value="Isoprene synthase, chloroplastic"/>
    <property type="match status" value="1"/>
</dbReference>
<dbReference type="Gene3D" id="1.10.600.10">
    <property type="entry name" value="Farnesyl Diphosphate Synthase"/>
    <property type="match status" value="1"/>
</dbReference>
<dbReference type="Gene3D" id="1.50.10.130">
    <property type="entry name" value="Terpene synthase, N-terminal domain"/>
    <property type="match status" value="1"/>
</dbReference>
<dbReference type="InterPro" id="IPR008949">
    <property type="entry name" value="Isoprenoid_synthase_dom_sf"/>
</dbReference>
<dbReference type="InterPro" id="IPR034741">
    <property type="entry name" value="Terpene_cyclase-like_1_C"/>
</dbReference>
<dbReference type="InterPro" id="IPR044814">
    <property type="entry name" value="Terpene_cyclase_plant_C1"/>
</dbReference>
<dbReference type="InterPro" id="IPR001906">
    <property type="entry name" value="Terpene_synth_N"/>
</dbReference>
<dbReference type="InterPro" id="IPR036965">
    <property type="entry name" value="Terpene_synth_N_sf"/>
</dbReference>
<dbReference type="InterPro" id="IPR050148">
    <property type="entry name" value="Terpene_synthase-like"/>
</dbReference>
<dbReference type="InterPro" id="IPR005630">
    <property type="entry name" value="Terpene_synthase_metal-bd"/>
</dbReference>
<dbReference type="InterPro" id="IPR008930">
    <property type="entry name" value="Terpenoid_cyclase/PrenylTrfase"/>
</dbReference>
<dbReference type="PANTHER" id="PTHR31225:SF251">
    <property type="entry name" value="(-)-GERMACRENE D SYNTHASE-LIKE ISOFORM X2"/>
    <property type="match status" value="1"/>
</dbReference>
<dbReference type="PANTHER" id="PTHR31225">
    <property type="entry name" value="OS04G0344100 PROTEIN-RELATED"/>
    <property type="match status" value="1"/>
</dbReference>
<dbReference type="Pfam" id="PF01397">
    <property type="entry name" value="Terpene_synth"/>
    <property type="match status" value="1"/>
</dbReference>
<dbReference type="Pfam" id="PF03936">
    <property type="entry name" value="Terpene_synth_C"/>
    <property type="match status" value="1"/>
</dbReference>
<dbReference type="SFLD" id="SFLDS00005">
    <property type="entry name" value="Isoprenoid_Synthase_Type_I"/>
    <property type="match status" value="1"/>
</dbReference>
<dbReference type="SFLD" id="SFLDG01019">
    <property type="entry name" value="Terpene_Cyclase_Like_1_C_Termi"/>
    <property type="match status" value="1"/>
</dbReference>
<dbReference type="SUPFAM" id="SSF48239">
    <property type="entry name" value="Terpenoid cyclases/Protein prenyltransferases"/>
    <property type="match status" value="1"/>
</dbReference>
<dbReference type="SUPFAM" id="SSF48576">
    <property type="entry name" value="Terpenoid synthases"/>
    <property type="match status" value="1"/>
</dbReference>
<evidence type="ECO:0000250" key="1"/>
<evidence type="ECO:0000269" key="2">
    <source>
    </source>
</evidence>
<evidence type="ECO:0000305" key="3"/>
<evidence type="ECO:0000305" key="4">
    <source>
    </source>
</evidence>
<reference key="1">
    <citation type="journal article" date="2010" name="Plant Physiol.">
        <title>Characterization of {delta}-Guaiene Synthases from Cultured Cells of Aquilaria, Responsible for the Formation of the Sesquiterpenes in Agarwood.</title>
        <authorList>
            <person name="Kumeta Y."/>
            <person name="Ito M."/>
        </authorList>
    </citation>
    <scope>NUCLEOTIDE SEQUENCE [MRNA]</scope>
    <scope>INDUCTION BY METHYL JASMONATE</scope>
    <scope>MUTAGENESIS OF TYR-110; TRP-144; VAL-241; PRO-296 AND HIS-337</scope>
    <scope>3D-STRUCTURE MODELING</scope>
</reference>
<accession>D0VMR5</accession>
<comment type="cofactor">
    <cofactor evidence="1">
        <name>Mg(2+)</name>
        <dbReference type="ChEBI" id="CHEBI:18420"/>
    </cofactor>
    <text evidence="1">Binds 3 Mg(2+) ions per subunit.</text>
</comment>
<comment type="induction">
    <text evidence="2">Up-regulated by methyl jasmonate.</text>
</comment>
<comment type="domain">
    <text evidence="1">The Asp-Asp-Xaa-Xaa-Asp/Glu (DDXXD/E) motif is important for the catalytic activity, presumably through binding to Mg(2+).</text>
</comment>
<comment type="miscellaneous">
    <text evidence="4">Site-directed mutagenesis and 3-D homology modeling suggest that the structure of the N-terminal domain is important in facilitating proper folding of the protein to form a catalytically active enzyme.</text>
</comment>
<comment type="similarity">
    <text evidence="3">Belongs to the terpene synthase family.</text>
</comment>
<organism>
    <name type="scientific">Aquilaria crassna</name>
    <name type="common">Eagle wood</name>
    <dbReference type="NCBI Taxonomy" id="223751"/>
    <lineage>
        <taxon>Eukaryota</taxon>
        <taxon>Viridiplantae</taxon>
        <taxon>Streptophyta</taxon>
        <taxon>Embryophyta</taxon>
        <taxon>Tracheophyta</taxon>
        <taxon>Spermatophyta</taxon>
        <taxon>Magnoliopsida</taxon>
        <taxon>eudicotyledons</taxon>
        <taxon>Gunneridae</taxon>
        <taxon>Pentapetalae</taxon>
        <taxon>rosids</taxon>
        <taxon>malvids</taxon>
        <taxon>Malvales</taxon>
        <taxon>Thymelaeaceae</taxon>
        <taxon>Aquilaria</taxon>
    </lineage>
</organism>